<accession>P29754</accession>
<dbReference type="EMBL" id="S37484">
    <property type="protein sequence ID" value="AAB22269.1"/>
    <property type="molecule type" value="Genomic_DNA"/>
</dbReference>
<dbReference type="EMBL" id="BC036175">
    <property type="protein sequence ID" value="AAH36175.1"/>
    <property type="molecule type" value="mRNA"/>
</dbReference>
<dbReference type="CCDS" id="CCDS26415.1"/>
<dbReference type="PIR" id="JH0621">
    <property type="entry name" value="JH0621"/>
</dbReference>
<dbReference type="RefSeq" id="NP_796296.1">
    <property type="nucleotide sequence ID" value="NM_177322.3"/>
</dbReference>
<dbReference type="RefSeq" id="XP_006516597.1">
    <property type="nucleotide sequence ID" value="XM_006516534.3"/>
</dbReference>
<dbReference type="RefSeq" id="XP_011242566.1">
    <property type="nucleotide sequence ID" value="XM_011244264.3"/>
</dbReference>
<dbReference type="SMR" id="P29754"/>
<dbReference type="BioGRID" id="198029">
    <property type="interactions" value="3"/>
</dbReference>
<dbReference type="CORUM" id="P29754"/>
<dbReference type="FunCoup" id="P29754">
    <property type="interactions" value="1354"/>
</dbReference>
<dbReference type="IntAct" id="P29754">
    <property type="interactions" value="3"/>
</dbReference>
<dbReference type="MINT" id="P29754"/>
<dbReference type="STRING" id="10090.ENSMUSP00000070958"/>
<dbReference type="BindingDB" id="P29754"/>
<dbReference type="ChEMBL" id="CHEMBL5741"/>
<dbReference type="GlyCosmos" id="P29754">
    <property type="glycosylation" value="3 sites, No reported glycans"/>
</dbReference>
<dbReference type="GlyGen" id="P29754">
    <property type="glycosylation" value="3 sites"/>
</dbReference>
<dbReference type="iPTMnet" id="P29754"/>
<dbReference type="PhosphoSitePlus" id="P29754"/>
<dbReference type="PaxDb" id="10090-ENSMUSP00000070958"/>
<dbReference type="DNASU" id="11607"/>
<dbReference type="Ensembl" id="ENSMUST00000066412.8">
    <property type="protein sequence ID" value="ENSMUSP00000070958.8"/>
    <property type="gene ID" value="ENSMUSG00000049115.16"/>
</dbReference>
<dbReference type="GeneID" id="11607"/>
<dbReference type="KEGG" id="mmu:11607"/>
<dbReference type="UCSC" id="uc007pyu.2">
    <property type="organism name" value="mouse"/>
</dbReference>
<dbReference type="AGR" id="MGI:87964"/>
<dbReference type="CTD" id="11607"/>
<dbReference type="MGI" id="MGI:87964">
    <property type="gene designation" value="Agtr1a"/>
</dbReference>
<dbReference type="VEuPathDB" id="HostDB:ENSMUSG00000049115"/>
<dbReference type="eggNOG" id="KOG3656">
    <property type="taxonomic scope" value="Eukaryota"/>
</dbReference>
<dbReference type="GeneTree" id="ENSGT01130000278303"/>
<dbReference type="HOGENOM" id="CLU_009579_8_3_1"/>
<dbReference type="InParanoid" id="P29754"/>
<dbReference type="OMA" id="QVFHFMQ"/>
<dbReference type="OrthoDB" id="8804420at2759"/>
<dbReference type="PhylomeDB" id="P29754"/>
<dbReference type="TreeFam" id="TF330024"/>
<dbReference type="Reactome" id="R-MMU-375276">
    <property type="pathway name" value="Peptide ligand-binding receptors"/>
</dbReference>
<dbReference type="Reactome" id="R-MMU-416476">
    <property type="pathway name" value="G alpha (q) signalling events"/>
</dbReference>
<dbReference type="Reactome" id="R-MMU-8856825">
    <property type="pathway name" value="Cargo recognition for clathrin-mediated endocytosis"/>
</dbReference>
<dbReference type="Reactome" id="R-MMU-8856828">
    <property type="pathway name" value="Clathrin-mediated endocytosis"/>
</dbReference>
<dbReference type="BioGRID-ORCS" id="11607">
    <property type="hits" value="0 hits in 77 CRISPR screens"/>
</dbReference>
<dbReference type="ChiTaRS" id="Agtr1a">
    <property type="organism name" value="mouse"/>
</dbReference>
<dbReference type="PRO" id="PR:P29754"/>
<dbReference type="Proteomes" id="UP000000589">
    <property type="component" value="Chromosome 13"/>
</dbReference>
<dbReference type="RNAct" id="P29754">
    <property type="molecule type" value="protein"/>
</dbReference>
<dbReference type="Bgee" id="ENSMUSG00000049115">
    <property type="expression patterns" value="Expressed in adrenal gland and 163 other cell types or tissues"/>
</dbReference>
<dbReference type="ExpressionAtlas" id="P29754">
    <property type="expression patterns" value="baseline and differential"/>
</dbReference>
<dbReference type="GO" id="GO:0016323">
    <property type="term" value="C:basolateral plasma membrane"/>
    <property type="evidence" value="ECO:0007669"/>
    <property type="project" value="Ensembl"/>
</dbReference>
<dbReference type="GO" id="GO:0005737">
    <property type="term" value="C:cytoplasm"/>
    <property type="evidence" value="ECO:0000314"/>
    <property type="project" value="MGI"/>
</dbReference>
<dbReference type="GO" id="GO:0030425">
    <property type="term" value="C:dendrite"/>
    <property type="evidence" value="ECO:0007669"/>
    <property type="project" value="Ensembl"/>
</dbReference>
<dbReference type="GO" id="GO:0005768">
    <property type="term" value="C:endosome"/>
    <property type="evidence" value="ECO:0000314"/>
    <property type="project" value="MGI"/>
</dbReference>
<dbReference type="GO" id="GO:0005794">
    <property type="term" value="C:Golgi apparatus"/>
    <property type="evidence" value="ECO:0007669"/>
    <property type="project" value="Ensembl"/>
</dbReference>
<dbReference type="GO" id="GO:0031968">
    <property type="term" value="C:organelle outer membrane"/>
    <property type="evidence" value="ECO:0007669"/>
    <property type="project" value="Ensembl"/>
</dbReference>
<dbReference type="GO" id="GO:0005886">
    <property type="term" value="C:plasma membrane"/>
    <property type="evidence" value="ECO:0000314"/>
    <property type="project" value="MGI"/>
</dbReference>
<dbReference type="GO" id="GO:0055037">
    <property type="term" value="C:recycling endosome"/>
    <property type="evidence" value="ECO:0007669"/>
    <property type="project" value="Ensembl"/>
</dbReference>
<dbReference type="GO" id="GO:0001596">
    <property type="term" value="F:angiotensin type I receptor activity"/>
    <property type="evidence" value="ECO:0000314"/>
    <property type="project" value="MGI"/>
</dbReference>
<dbReference type="GO" id="GO:0004945">
    <property type="term" value="F:angiotensin type II receptor activity"/>
    <property type="evidence" value="ECO:0007669"/>
    <property type="project" value="InterPro"/>
</dbReference>
<dbReference type="GO" id="GO:0031748">
    <property type="term" value="F:D1 dopamine receptor binding"/>
    <property type="evidence" value="ECO:0007669"/>
    <property type="project" value="Ensembl"/>
</dbReference>
<dbReference type="GO" id="GO:0019901">
    <property type="term" value="F:protein kinase binding"/>
    <property type="evidence" value="ECO:0007669"/>
    <property type="project" value="Ensembl"/>
</dbReference>
<dbReference type="GO" id="GO:0001568">
    <property type="term" value="P:blood vessel development"/>
    <property type="evidence" value="ECO:0000316"/>
    <property type="project" value="MGI"/>
</dbReference>
<dbReference type="GO" id="GO:0002035">
    <property type="term" value="P:brain renin-angiotensin system"/>
    <property type="evidence" value="ECO:0000315"/>
    <property type="project" value="MGI"/>
</dbReference>
<dbReference type="GO" id="GO:0071549">
    <property type="term" value="P:cellular response to dexamethasone stimulus"/>
    <property type="evidence" value="ECO:0007669"/>
    <property type="project" value="Ensembl"/>
</dbReference>
<dbReference type="GO" id="GO:0042416">
    <property type="term" value="P:dopamine biosynthetic process"/>
    <property type="evidence" value="ECO:0007669"/>
    <property type="project" value="Ensembl"/>
</dbReference>
<dbReference type="GO" id="GO:0042756">
    <property type="term" value="P:drinking behavior"/>
    <property type="evidence" value="ECO:0000315"/>
    <property type="project" value="MGI"/>
</dbReference>
<dbReference type="GO" id="GO:0007186">
    <property type="term" value="P:G protein-coupled receptor signaling pathway"/>
    <property type="evidence" value="ECO:0000305"/>
    <property type="project" value="MGI"/>
</dbReference>
<dbReference type="GO" id="GO:0010467">
    <property type="term" value="P:gene expression"/>
    <property type="evidence" value="ECO:0000315"/>
    <property type="project" value="MGI"/>
</dbReference>
<dbReference type="GO" id="GO:0007507">
    <property type="term" value="P:heart development"/>
    <property type="evidence" value="ECO:0000315"/>
    <property type="project" value="MGI"/>
</dbReference>
<dbReference type="GO" id="GO:0006954">
    <property type="term" value="P:inflammatory response"/>
    <property type="evidence" value="ECO:0000316"/>
    <property type="project" value="MGI"/>
</dbReference>
<dbReference type="GO" id="GO:0001822">
    <property type="term" value="P:kidney development"/>
    <property type="evidence" value="ECO:0000315"/>
    <property type="project" value="MGI"/>
</dbReference>
<dbReference type="GO" id="GO:0002034">
    <property type="term" value="P:maintenance of blood vessel diameter homeostasis by renin-angiotensin"/>
    <property type="evidence" value="ECO:0000250"/>
    <property type="project" value="UniProtKB"/>
</dbReference>
<dbReference type="GO" id="GO:0034392">
    <property type="term" value="P:negative regulation of smooth muscle cell apoptotic process"/>
    <property type="evidence" value="ECO:0000315"/>
    <property type="project" value="MGI"/>
</dbReference>
<dbReference type="GO" id="GO:0051402">
    <property type="term" value="P:neuron apoptotic process"/>
    <property type="evidence" value="ECO:0000315"/>
    <property type="project" value="MGI"/>
</dbReference>
<dbReference type="GO" id="GO:0045766">
    <property type="term" value="P:positive regulation of angiogenesis"/>
    <property type="evidence" value="ECO:0007669"/>
    <property type="project" value="Ensembl"/>
</dbReference>
<dbReference type="GO" id="GO:0045777">
    <property type="term" value="P:positive regulation of blood pressure"/>
    <property type="evidence" value="ECO:0000314"/>
    <property type="project" value="MGI"/>
</dbReference>
<dbReference type="GO" id="GO:0090190">
    <property type="term" value="P:positive regulation of branching involved in ureteric bud morphogenesis"/>
    <property type="evidence" value="ECO:0007669"/>
    <property type="project" value="Ensembl"/>
</dbReference>
<dbReference type="GO" id="GO:1905665">
    <property type="term" value="P:positive regulation of calcium ion import across plasma membrane"/>
    <property type="evidence" value="ECO:0007669"/>
    <property type="project" value="Ensembl"/>
</dbReference>
<dbReference type="GO" id="GO:0001819">
    <property type="term" value="P:positive regulation of cytokine production"/>
    <property type="evidence" value="ECO:0000315"/>
    <property type="project" value="UniProtKB"/>
</dbReference>
<dbReference type="GO" id="GO:0001921">
    <property type="term" value="P:positive regulation of receptor recycling"/>
    <property type="evidence" value="ECO:0007669"/>
    <property type="project" value="Ensembl"/>
</dbReference>
<dbReference type="GO" id="GO:0032930">
    <property type="term" value="P:positive regulation of superoxide anion generation"/>
    <property type="evidence" value="ECO:0007669"/>
    <property type="project" value="Ensembl"/>
</dbReference>
<dbReference type="GO" id="GO:1904707">
    <property type="term" value="P:positive regulation of vascular associated smooth muscle cell proliferation"/>
    <property type="evidence" value="ECO:0000315"/>
    <property type="project" value="MGI"/>
</dbReference>
<dbReference type="GO" id="GO:0008217">
    <property type="term" value="P:regulation of blood pressure"/>
    <property type="evidence" value="ECO:0000315"/>
    <property type="project" value="MGI"/>
</dbReference>
<dbReference type="GO" id="GO:0006885">
    <property type="term" value="P:regulation of pH"/>
    <property type="evidence" value="ECO:0007669"/>
    <property type="project" value="Ensembl"/>
</dbReference>
<dbReference type="GO" id="GO:0002019">
    <property type="term" value="P:regulation of renal output by angiotensin"/>
    <property type="evidence" value="ECO:0000315"/>
    <property type="project" value="MGI"/>
</dbReference>
<dbReference type="GO" id="GO:0001991">
    <property type="term" value="P:regulation of systemic arterial blood pressure by circulatory renin-angiotensin"/>
    <property type="evidence" value="ECO:0000316"/>
    <property type="project" value="MGI"/>
</dbReference>
<dbReference type="GO" id="GO:1905459">
    <property type="term" value="P:regulation of vascular associated smooth muscle cell apoptotic process"/>
    <property type="evidence" value="ECO:0000316"/>
    <property type="project" value="MGI"/>
</dbReference>
<dbReference type="GO" id="GO:0019229">
    <property type="term" value="P:regulation of vasoconstriction"/>
    <property type="evidence" value="ECO:0007669"/>
    <property type="project" value="InterPro"/>
</dbReference>
<dbReference type="GO" id="GO:0002001">
    <property type="term" value="P:renin secretion into blood stream"/>
    <property type="evidence" value="ECO:0000315"/>
    <property type="project" value="MGI"/>
</dbReference>
<dbReference type="GO" id="GO:0002018">
    <property type="term" value="P:renin-angiotensin regulation of aldosterone production"/>
    <property type="evidence" value="ECO:0000315"/>
    <property type="project" value="MGI"/>
</dbReference>
<dbReference type="GO" id="GO:0014823">
    <property type="term" value="P:response to activity"/>
    <property type="evidence" value="ECO:0007669"/>
    <property type="project" value="Ensembl"/>
</dbReference>
<dbReference type="GO" id="GO:0051412">
    <property type="term" value="P:response to corticosterone"/>
    <property type="evidence" value="ECO:0007669"/>
    <property type="project" value="Ensembl"/>
</dbReference>
<dbReference type="GO" id="GO:0043627">
    <property type="term" value="P:response to estrogen"/>
    <property type="evidence" value="ECO:0007669"/>
    <property type="project" value="Ensembl"/>
</dbReference>
<dbReference type="GO" id="GO:0009651">
    <property type="term" value="P:response to salt stress"/>
    <property type="evidence" value="ECO:0007669"/>
    <property type="project" value="Ensembl"/>
</dbReference>
<dbReference type="GO" id="GO:1990874">
    <property type="term" value="P:vascular associated smooth muscle cell proliferation"/>
    <property type="evidence" value="ECO:0000315"/>
    <property type="project" value="MGI"/>
</dbReference>
<dbReference type="GO" id="GO:0042310">
    <property type="term" value="P:vasoconstriction"/>
    <property type="evidence" value="ECO:0007669"/>
    <property type="project" value="Ensembl"/>
</dbReference>
<dbReference type="CDD" id="cd15192">
    <property type="entry name" value="7tmA_AT1R"/>
    <property type="match status" value="1"/>
</dbReference>
<dbReference type="FunFam" id="1.20.1070.10:FF:000088">
    <property type="entry name" value="Angiotensin II receptor type 1"/>
    <property type="match status" value="1"/>
</dbReference>
<dbReference type="Gene3D" id="1.20.1070.10">
    <property type="entry name" value="Rhodopsin 7-helix transmembrane proteins"/>
    <property type="match status" value="1"/>
</dbReference>
<dbReference type="InterPro" id="IPR000190">
    <property type="entry name" value="ATII_AT1_rcpt"/>
</dbReference>
<dbReference type="InterPro" id="IPR000248">
    <property type="entry name" value="ATII_rcpt"/>
</dbReference>
<dbReference type="InterPro" id="IPR050119">
    <property type="entry name" value="CCR1-9-like"/>
</dbReference>
<dbReference type="InterPro" id="IPR000276">
    <property type="entry name" value="GPCR_Rhodpsn"/>
</dbReference>
<dbReference type="InterPro" id="IPR017452">
    <property type="entry name" value="GPCR_Rhodpsn_7TM"/>
</dbReference>
<dbReference type="PANTHER" id="PTHR10489">
    <property type="entry name" value="CELL ADHESION MOLECULE"/>
    <property type="match status" value="1"/>
</dbReference>
<dbReference type="PANTHER" id="PTHR10489:SF956">
    <property type="entry name" value="TYPE-1 ANGIOTENSIN II RECEPTOR A"/>
    <property type="match status" value="1"/>
</dbReference>
<dbReference type="Pfam" id="PF00001">
    <property type="entry name" value="7tm_1"/>
    <property type="match status" value="1"/>
</dbReference>
<dbReference type="PRINTS" id="PR00241">
    <property type="entry name" value="ANGIOTENSINR"/>
</dbReference>
<dbReference type="PRINTS" id="PR00635">
    <property type="entry name" value="ANGIOTENSN1R"/>
</dbReference>
<dbReference type="PRINTS" id="PR00237">
    <property type="entry name" value="GPCRRHODOPSN"/>
</dbReference>
<dbReference type="SMART" id="SM01381">
    <property type="entry name" value="7TM_GPCR_Srsx"/>
    <property type="match status" value="1"/>
</dbReference>
<dbReference type="SUPFAM" id="SSF81321">
    <property type="entry name" value="Family A G protein-coupled receptor-like"/>
    <property type="match status" value="1"/>
</dbReference>
<dbReference type="PROSITE" id="PS00237">
    <property type="entry name" value="G_PROTEIN_RECEP_F1_1"/>
    <property type="match status" value="1"/>
</dbReference>
<dbReference type="PROSITE" id="PS50262">
    <property type="entry name" value="G_PROTEIN_RECEP_F1_2"/>
    <property type="match status" value="1"/>
</dbReference>
<feature type="chain" id="PRO_0000069155" description="Type-1 angiotensin II receptor A">
    <location>
        <begin position="1"/>
        <end position="359"/>
    </location>
</feature>
<feature type="topological domain" description="Extracellular" evidence="2">
    <location>
        <begin position="1"/>
        <end position="25"/>
    </location>
</feature>
<feature type="transmembrane region" description="Helical; Name=1" evidence="2">
    <location>
        <begin position="26"/>
        <end position="55"/>
    </location>
</feature>
<feature type="topological domain" description="Cytoplasmic" evidence="2">
    <location>
        <begin position="56"/>
        <end position="61"/>
    </location>
</feature>
<feature type="transmembrane region" description="Helical; Name=2" evidence="2">
    <location>
        <begin position="62"/>
        <end position="89"/>
    </location>
</feature>
<feature type="topological domain" description="Extracellular" evidence="2 8">
    <location>
        <begin position="90"/>
        <end position="98"/>
    </location>
</feature>
<feature type="transmembrane region" description="Helical; Name=3" evidence="2">
    <location>
        <begin position="99"/>
        <end position="125"/>
    </location>
</feature>
<feature type="topological domain" description="Cytoplasmic" evidence="2">
    <location>
        <begin position="126"/>
        <end position="141"/>
    </location>
</feature>
<feature type="transmembrane region" description="Helical; Name=4" evidence="2">
    <location>
        <begin position="142"/>
        <end position="165"/>
    </location>
</feature>
<feature type="topological domain" description="Extracellular" evidence="2">
    <location>
        <begin position="166"/>
        <end position="190"/>
    </location>
</feature>
<feature type="transmembrane region" description="Helical; Name=5" evidence="2">
    <location>
        <begin position="191"/>
        <end position="216"/>
    </location>
</feature>
<feature type="topological domain" description="Cytoplasmic" evidence="2">
    <location>
        <begin position="217"/>
        <end position="239"/>
    </location>
</feature>
<feature type="transmembrane region" description="Helical; Name=6" evidence="2">
    <location>
        <begin position="240"/>
        <end position="268"/>
    </location>
</feature>
<feature type="topological domain" description="Extracellular" evidence="2">
    <location>
        <begin position="269"/>
        <end position="278"/>
    </location>
</feature>
<feature type="transmembrane region" description="Helical; Name=7" evidence="2">
    <location>
        <begin position="279"/>
        <end position="304"/>
    </location>
</feature>
<feature type="topological domain" description="Cytoplasmic" evidence="2">
    <location>
        <begin position="305"/>
        <end position="359"/>
    </location>
</feature>
<feature type="region of interest" description="Disordered" evidence="5">
    <location>
        <begin position="335"/>
        <end position="359"/>
    </location>
</feature>
<feature type="compositionally biased region" description="Polar residues" evidence="5">
    <location>
        <begin position="335"/>
        <end position="347"/>
    </location>
</feature>
<feature type="binding site" evidence="2">
    <location>
        <position position="15"/>
    </location>
    <ligand>
        <name>angiotensin II</name>
        <dbReference type="ChEBI" id="CHEBI:58506"/>
    </ligand>
</feature>
<feature type="binding site" evidence="2">
    <location>
        <position position="17"/>
    </location>
    <ligand>
        <name>angiotensin II</name>
        <dbReference type="ChEBI" id="CHEBI:58506"/>
    </ligand>
</feature>
<feature type="binding site" evidence="2">
    <location>
        <position position="167"/>
    </location>
    <ligand>
        <name>angiotensin II</name>
        <dbReference type="ChEBI" id="CHEBI:58506"/>
    </ligand>
</feature>
<feature type="binding site" evidence="2">
    <location>
        <position position="182"/>
    </location>
    <ligand>
        <name>angiotensin II</name>
        <dbReference type="ChEBI" id="CHEBI:58506"/>
    </ligand>
</feature>
<feature type="binding site" evidence="2">
    <location>
        <position position="183"/>
    </location>
    <ligand>
        <name>angiotensin II</name>
        <dbReference type="ChEBI" id="CHEBI:58506"/>
    </ligand>
</feature>
<feature type="binding site" evidence="2">
    <location>
        <position position="184"/>
    </location>
    <ligand>
        <name>angiotensin II</name>
        <dbReference type="ChEBI" id="CHEBI:58506"/>
    </ligand>
</feature>
<feature type="binding site" evidence="2">
    <location>
        <position position="199"/>
    </location>
    <ligand>
        <name>angiotensin II</name>
        <dbReference type="ChEBI" id="CHEBI:58506"/>
    </ligand>
</feature>
<feature type="lipid moiety-binding region" description="S-palmitoyl cysteine" evidence="3">
    <location>
        <position position="355"/>
    </location>
</feature>
<feature type="glycosylation site" description="N-linked (GlcNAc...) asparagine" evidence="3">
    <location>
        <position position="4"/>
    </location>
</feature>
<feature type="glycosylation site" description="N-linked (GlcNAc...) asparagine" evidence="3">
    <location>
        <position position="176"/>
    </location>
</feature>
<feature type="glycosylation site" description="N-linked (GlcNAc...) asparagine" evidence="3">
    <location>
        <position position="188"/>
    </location>
</feature>
<feature type="disulfide bond" evidence="2">
    <location>
        <begin position="18"/>
        <end position="274"/>
    </location>
</feature>
<feature type="disulfide bond" evidence="4">
    <location>
        <begin position="101"/>
        <end position="180"/>
    </location>
</feature>
<feature type="sequence conflict" description="In Ref. 2." evidence="8" ref="2">
    <original>T</original>
    <variation>I</variation>
    <location>
        <position position="7"/>
    </location>
</feature>
<feature type="sequence conflict" description="In Ref. 2." evidence="8" ref="2">
    <original>RA</original>
    <variation>IS</variation>
    <location>
        <begin position="20"/>
        <end position="21"/>
    </location>
</feature>
<feature type="sequence conflict" description="In Ref. 2." evidence="8" ref="2">
    <original>I</original>
    <variation>M</variation>
    <location>
        <position position="38"/>
    </location>
</feature>
<feature type="sequence conflict" description="In Ref. 2." evidence="8" ref="2">
    <original>M</original>
    <variation>K</variation>
    <location>
        <position position="134"/>
    </location>
</feature>
<keyword id="KW-1003">Cell membrane</keyword>
<keyword id="KW-1015">Disulfide bond</keyword>
<keyword id="KW-0297">G-protein coupled receptor</keyword>
<keyword id="KW-0325">Glycoprotein</keyword>
<keyword id="KW-0449">Lipoprotein</keyword>
<keyword id="KW-0472">Membrane</keyword>
<keyword id="KW-0564">Palmitate</keyword>
<keyword id="KW-0597">Phosphoprotein</keyword>
<keyword id="KW-0675">Receptor</keyword>
<keyword id="KW-1185">Reference proteome</keyword>
<keyword id="KW-0807">Transducer</keyword>
<keyword id="KW-0812">Transmembrane</keyword>
<keyword id="KW-1133">Transmembrane helix</keyword>
<name>AGTRA_MOUSE</name>
<sequence>MALNSSTEDGIKRIQDDCPRAGRHSYIFVMIPTLYSIIFVVGIFGNSLVVIVIYFYMKLKTVASVFLLNLALADLCFLLTLPLWAVYTAMEYRWPFGNHLCKIASASVSFNLYASVFLLTCLSIDRYLAIVHPMKSRLRRTMLVAKVTCIIIWLMAGLASLPAVIHRNVYFIENTNITVCAFHYESRNSTLPIGLGLTKNILGFLFPFLIILTSYTLIWKALKKAYEIQKNKPRNDDIFRIIMAIVLFFFFSWVPHQIFTFLDVLIQLGVIHDCKIADIVDTAMPITICIAYFNNCLNPLFYGFLGKKFKKYFLQLLKYIPPKAKSHSSLSTKMSTLSYRPSDNMSSAAKKPASCSEVE</sequence>
<evidence type="ECO:0000250" key="1">
    <source>
        <dbReference type="UniProtKB" id="P25095"/>
    </source>
</evidence>
<evidence type="ECO:0000250" key="2">
    <source>
        <dbReference type="UniProtKB" id="P30556"/>
    </source>
</evidence>
<evidence type="ECO:0000255" key="3"/>
<evidence type="ECO:0000255" key="4">
    <source>
        <dbReference type="PROSITE-ProRule" id="PRU00521"/>
    </source>
</evidence>
<evidence type="ECO:0000256" key="5">
    <source>
        <dbReference type="SAM" id="MobiDB-lite"/>
    </source>
</evidence>
<evidence type="ECO:0000303" key="6">
    <source>
    </source>
</evidence>
<evidence type="ECO:0000303" key="7">
    <source>
    </source>
</evidence>
<evidence type="ECO:0000305" key="8"/>
<proteinExistence type="evidence at protein level"/>
<protein>
    <recommendedName>
        <fullName evidence="8">Type-1 angiotensin II receptor A</fullName>
    </recommendedName>
    <alternativeName>
        <fullName evidence="6">Angiotensin II type-1 receptor A</fullName>
        <shortName evidence="7">AT1 receptor A</shortName>
    </alternativeName>
</protein>
<gene>
    <name type="primary">Agtr1a</name>
    <name type="synonym">Agtr1</name>
</gene>
<organism>
    <name type="scientific">Mus musculus</name>
    <name type="common">Mouse</name>
    <dbReference type="NCBI Taxonomy" id="10090"/>
    <lineage>
        <taxon>Eukaryota</taxon>
        <taxon>Metazoa</taxon>
        <taxon>Chordata</taxon>
        <taxon>Craniata</taxon>
        <taxon>Vertebrata</taxon>
        <taxon>Euteleostomi</taxon>
        <taxon>Mammalia</taxon>
        <taxon>Eutheria</taxon>
        <taxon>Euarchontoglires</taxon>
        <taxon>Glires</taxon>
        <taxon>Rodentia</taxon>
        <taxon>Myomorpha</taxon>
        <taxon>Muroidea</taxon>
        <taxon>Muridae</taxon>
        <taxon>Murinae</taxon>
        <taxon>Mus</taxon>
        <taxon>Mus</taxon>
    </lineage>
</organism>
<comment type="function">
    <text evidence="2">Receptor for angiotensin II, a vasoconstricting peptide, which acts as a key regulator of blood pressure and sodium retention by the kidney. The activated receptor in turn couples to G-alpha proteins G(q) (GNAQ, GNA11, GNA14 or GNA15) and thus activates phospholipase C and increases the cytosolic Ca(2+) concentrations, which in turn triggers cellular responses such as stimulation of protein kinase C.</text>
</comment>
<comment type="subunit">
    <text evidence="1 2">Interacts with MAS1 (By similarity). Interacts with ARRB1 (By similarity). Interacts with FLNA (via filamin repeat 21); increases PKA-mediated phosphorylation of FLNA (By similarity).</text>
</comment>
<comment type="interaction">
    <interactant intactId="EBI-765178">
        <id>P29754</id>
    </interactant>
    <interactant intactId="EBI-645964">
        <id>Q9WVK0</id>
        <label>Agtrap</label>
    </interactant>
    <organismsDiffer>false</organismsDiffer>
    <experiments>5</experiments>
</comment>
<comment type="subcellular location">
    <subcellularLocation>
        <location evidence="2">Cell membrane</location>
        <topology evidence="2">Multi-pass membrane protein</topology>
    </subcellularLocation>
</comment>
<comment type="PTM">
    <text evidence="2">C-terminal Ser or Thr residues may be phosphorylated.</text>
</comment>
<comment type="similarity">
    <text evidence="4">Belongs to the G-protein coupled receptor 1 family.</text>
</comment>
<reference key="1">
    <citation type="journal article" date="1992" name="Biochem. Biophys. Res. Commun.">
        <title>Cloning, characterization, and expression of two angiotensin receptor (AT-1) isoforms from the mouse genome.</title>
        <authorList>
            <person name="Sasamura H."/>
            <person name="Hein L."/>
            <person name="Krieger J.E."/>
            <person name="Pratt R.E."/>
            <person name="Kobilka B.K."/>
            <person name="Dzau V.J."/>
        </authorList>
    </citation>
    <scope>NUCLEOTIDE SEQUENCE [GENOMIC DNA]</scope>
    <source>
        <strain>BALB/cJ</strain>
        <tissue>Liver</tissue>
    </source>
</reference>
<reference key="2">
    <citation type="journal article" date="1992" name="Biochem. Biophys. Res. Commun.">
        <title>Analysis of the evolution of angiotensin II type 1 receptor gene in mammals (mouse, rat, bovine and human).</title>
        <authorList>
            <person name="Yoshida H."/>
            <person name="Kakuchi J."/>
            <person name="Guo D.F."/>
            <person name="Furuta H."/>
            <person name="Iwai N."/>
            <person name="van der Meer-De Jong R."/>
            <person name="Inagami T."/>
            <person name="Ichikawa I."/>
        </authorList>
    </citation>
    <scope>NUCLEOTIDE SEQUENCE [GENOMIC DNA / MRNA]</scope>
</reference>
<reference key="3">
    <citation type="journal article" date="2004" name="Genome Res.">
        <title>The status, quality, and expansion of the NIH full-length cDNA project: the Mammalian Gene Collection (MGC).</title>
        <authorList>
            <consortium name="The MGC Project Team"/>
        </authorList>
    </citation>
    <scope>NUCLEOTIDE SEQUENCE [LARGE SCALE MRNA]</scope>
    <source>
        <strain>FVB/N</strain>
        <tissue>Colon</tissue>
    </source>
</reference>